<feature type="chain" id="PRO_0000360020" description="Nucleoside-triphosphatase THEP1">
    <location>
        <begin position="1"/>
        <end position="173"/>
    </location>
</feature>
<feature type="binding site" evidence="1">
    <location>
        <begin position="9"/>
        <end position="16"/>
    </location>
    <ligand>
        <name>ATP</name>
        <dbReference type="ChEBI" id="CHEBI:30616"/>
    </ligand>
</feature>
<feature type="binding site" evidence="1">
    <location>
        <begin position="97"/>
        <end position="104"/>
    </location>
    <ligand>
        <name>ATP</name>
        <dbReference type="ChEBI" id="CHEBI:30616"/>
    </ligand>
</feature>
<proteinExistence type="inferred from homology"/>
<protein>
    <recommendedName>
        <fullName evidence="1">Nucleoside-triphosphatase THEP1</fullName>
        <shortName evidence="1">NTPase THEP1</shortName>
        <ecNumber evidence="1">3.6.1.15</ecNumber>
    </recommendedName>
    <alternativeName>
        <fullName evidence="1">Nucleoside triphosphate phosphohydrolase</fullName>
    </alternativeName>
</protein>
<dbReference type="EC" id="3.6.1.15" evidence="1"/>
<dbReference type="EMBL" id="CP000852">
    <property type="protein sequence ID" value="ABW01160.1"/>
    <property type="molecule type" value="Genomic_DNA"/>
</dbReference>
<dbReference type="RefSeq" id="WP_012185380.1">
    <property type="nucleotide sequence ID" value="NC_009954.1"/>
</dbReference>
<dbReference type="SMR" id="A8MB70"/>
<dbReference type="STRING" id="397948.Cmaq_0312"/>
<dbReference type="GeneID" id="5710298"/>
<dbReference type="KEGG" id="cma:Cmaq_0312"/>
<dbReference type="eggNOG" id="arCOG01034">
    <property type="taxonomic scope" value="Archaea"/>
</dbReference>
<dbReference type="HOGENOM" id="CLU_103145_1_1_2"/>
<dbReference type="OrthoDB" id="52698at2157"/>
<dbReference type="Proteomes" id="UP000001137">
    <property type="component" value="Chromosome"/>
</dbReference>
<dbReference type="GO" id="GO:0005524">
    <property type="term" value="F:ATP binding"/>
    <property type="evidence" value="ECO:0007669"/>
    <property type="project" value="UniProtKB-UniRule"/>
</dbReference>
<dbReference type="GO" id="GO:0017111">
    <property type="term" value="F:ribonucleoside triphosphate phosphatase activity"/>
    <property type="evidence" value="ECO:0007669"/>
    <property type="project" value="UniProtKB-UniRule"/>
</dbReference>
<dbReference type="CDD" id="cd19482">
    <property type="entry name" value="RecA-like_Thep1"/>
    <property type="match status" value="1"/>
</dbReference>
<dbReference type="Gene3D" id="3.40.50.300">
    <property type="entry name" value="P-loop containing nucleotide triphosphate hydrolases"/>
    <property type="match status" value="1"/>
</dbReference>
<dbReference type="HAMAP" id="MF_00796">
    <property type="entry name" value="NTPase_1"/>
    <property type="match status" value="1"/>
</dbReference>
<dbReference type="InterPro" id="IPR004948">
    <property type="entry name" value="Nuc-triphosphatase_THEP1"/>
</dbReference>
<dbReference type="InterPro" id="IPR027417">
    <property type="entry name" value="P-loop_NTPase"/>
</dbReference>
<dbReference type="PANTHER" id="PTHR43146">
    <property type="entry name" value="CANCER-RELATED NUCLEOSIDE-TRIPHOSPHATASE"/>
    <property type="match status" value="1"/>
</dbReference>
<dbReference type="PANTHER" id="PTHR43146:SF1">
    <property type="entry name" value="CANCER-RELATED NUCLEOSIDE-TRIPHOSPHATASE"/>
    <property type="match status" value="1"/>
</dbReference>
<dbReference type="Pfam" id="PF03266">
    <property type="entry name" value="NTPase_1"/>
    <property type="match status" value="1"/>
</dbReference>
<dbReference type="SUPFAM" id="SSF52540">
    <property type="entry name" value="P-loop containing nucleoside triphosphate hydrolases"/>
    <property type="match status" value="1"/>
</dbReference>
<evidence type="ECO:0000255" key="1">
    <source>
        <dbReference type="HAMAP-Rule" id="MF_00796"/>
    </source>
</evidence>
<gene>
    <name type="ordered locus">Cmaq_0312</name>
</gene>
<keyword id="KW-0067">ATP-binding</keyword>
<keyword id="KW-0378">Hydrolase</keyword>
<keyword id="KW-0547">Nucleotide-binding</keyword>
<keyword id="KW-1185">Reference proteome</keyword>
<sequence>MVQGVFVTGPPGVGKTTLIVKVTSRLKERGIRIVGFYTVEEREGGVRVGFRLVNVSNGEWRWLAHVNKVQGPMVGKYHVDVNSIEWGLTLLNQEGDLYVIDEVGPMEMKHPSFLRRVEDVVNSRRFLITIHVKMSNWVNSHLNLGSLIRLSYVNRDAAVDEVLNYLRTILNMA</sequence>
<reference key="1">
    <citation type="submission" date="2007-10" db="EMBL/GenBank/DDBJ databases">
        <title>Complete sequence of Caldivirga maquilingensis IC-167.</title>
        <authorList>
            <consortium name="US DOE Joint Genome Institute"/>
            <person name="Copeland A."/>
            <person name="Lucas S."/>
            <person name="Lapidus A."/>
            <person name="Barry K."/>
            <person name="Glavina del Rio T."/>
            <person name="Dalin E."/>
            <person name="Tice H."/>
            <person name="Pitluck S."/>
            <person name="Saunders E."/>
            <person name="Brettin T."/>
            <person name="Bruce D."/>
            <person name="Detter J.C."/>
            <person name="Han C."/>
            <person name="Schmutz J."/>
            <person name="Larimer F."/>
            <person name="Land M."/>
            <person name="Hauser L."/>
            <person name="Kyrpides N."/>
            <person name="Ivanova N."/>
            <person name="Biddle J.F."/>
            <person name="Zhang Z."/>
            <person name="Fitz-Gibbon S.T."/>
            <person name="Lowe T.M."/>
            <person name="Saltikov C."/>
            <person name="House C.H."/>
            <person name="Richardson P."/>
        </authorList>
    </citation>
    <scope>NUCLEOTIDE SEQUENCE [LARGE SCALE GENOMIC DNA]</scope>
    <source>
        <strain>ATCC 700844 / DSM 13496 / JCM 10307 / IC-167</strain>
    </source>
</reference>
<organism>
    <name type="scientific">Caldivirga maquilingensis (strain ATCC 700844 / DSM 13496 / JCM 10307 / IC-167)</name>
    <dbReference type="NCBI Taxonomy" id="397948"/>
    <lineage>
        <taxon>Archaea</taxon>
        <taxon>Thermoproteota</taxon>
        <taxon>Thermoprotei</taxon>
        <taxon>Thermoproteales</taxon>
        <taxon>Thermoproteaceae</taxon>
        <taxon>Caldivirga</taxon>
    </lineage>
</organism>
<comment type="function">
    <text evidence="1">Has nucleotide phosphatase activity towards ATP, GTP, CTP, TTP and UTP. May hydrolyze nucleoside diphosphates with lower efficiency.</text>
</comment>
<comment type="catalytic activity">
    <reaction evidence="1">
        <text>a ribonucleoside 5'-triphosphate + H2O = a ribonucleoside 5'-diphosphate + phosphate + H(+)</text>
        <dbReference type="Rhea" id="RHEA:23680"/>
        <dbReference type="ChEBI" id="CHEBI:15377"/>
        <dbReference type="ChEBI" id="CHEBI:15378"/>
        <dbReference type="ChEBI" id="CHEBI:43474"/>
        <dbReference type="ChEBI" id="CHEBI:57930"/>
        <dbReference type="ChEBI" id="CHEBI:61557"/>
        <dbReference type="EC" id="3.6.1.15"/>
    </reaction>
</comment>
<comment type="similarity">
    <text evidence="1">Belongs to the THEP1 NTPase family.</text>
</comment>
<name>NTPTH_CALMQ</name>
<accession>A8MB70</accession>